<gene>
    <name evidence="1" type="primary">ureC</name>
    <name type="ordered locus">Cgl0086</name>
    <name type="ordered locus">cg0115</name>
</gene>
<evidence type="ECO:0000255" key="1">
    <source>
        <dbReference type="HAMAP-Rule" id="MF_01953"/>
    </source>
</evidence>
<evidence type="ECO:0000269" key="2">
    <source>
    </source>
</evidence>
<evidence type="ECO:0000269" key="3">
    <source>
    </source>
</evidence>
<evidence type="ECO:0000269" key="4">
    <source>
    </source>
</evidence>
<evidence type="ECO:0000305" key="5"/>
<feature type="chain" id="PRO_0000234152" description="Urease subunit alpha">
    <location>
        <begin position="1"/>
        <end position="570"/>
    </location>
</feature>
<feature type="domain" description="Urease" evidence="1">
    <location>
        <begin position="132"/>
        <end position="570"/>
    </location>
</feature>
<feature type="active site" description="Proton donor" evidence="1">
    <location>
        <position position="323"/>
    </location>
</feature>
<feature type="binding site" evidence="1">
    <location>
        <position position="137"/>
    </location>
    <ligand>
        <name>Ni(2+)</name>
        <dbReference type="ChEBI" id="CHEBI:49786"/>
        <label>1</label>
    </ligand>
</feature>
<feature type="binding site" evidence="1">
    <location>
        <position position="139"/>
    </location>
    <ligand>
        <name>Ni(2+)</name>
        <dbReference type="ChEBI" id="CHEBI:49786"/>
        <label>1</label>
    </ligand>
</feature>
<feature type="binding site" description="via carbamate group" evidence="1">
    <location>
        <position position="220"/>
    </location>
    <ligand>
        <name>Ni(2+)</name>
        <dbReference type="ChEBI" id="CHEBI:49786"/>
        <label>1</label>
    </ligand>
</feature>
<feature type="binding site" description="via carbamate group" evidence="1">
    <location>
        <position position="220"/>
    </location>
    <ligand>
        <name>Ni(2+)</name>
        <dbReference type="ChEBI" id="CHEBI:49786"/>
        <label>2</label>
    </ligand>
</feature>
<feature type="binding site" evidence="1">
    <location>
        <position position="222"/>
    </location>
    <ligand>
        <name>substrate</name>
    </ligand>
</feature>
<feature type="binding site" evidence="1">
    <location>
        <position position="249"/>
    </location>
    <ligand>
        <name>Ni(2+)</name>
        <dbReference type="ChEBI" id="CHEBI:49786"/>
        <label>2</label>
    </ligand>
</feature>
<feature type="binding site" evidence="1">
    <location>
        <position position="275"/>
    </location>
    <ligand>
        <name>Ni(2+)</name>
        <dbReference type="ChEBI" id="CHEBI:49786"/>
        <label>2</label>
    </ligand>
</feature>
<feature type="binding site" evidence="1">
    <location>
        <position position="363"/>
    </location>
    <ligand>
        <name>Ni(2+)</name>
        <dbReference type="ChEBI" id="CHEBI:49786"/>
        <label>1</label>
    </ligand>
</feature>
<feature type="modified residue" description="N6-carboxylysine" evidence="1">
    <location>
        <position position="220"/>
    </location>
</feature>
<feature type="sequence conflict" description="In Ref. 1; BAA88554." evidence="5" ref="1">
    <original>I</original>
    <variation>V</variation>
    <location>
        <position position="40"/>
    </location>
</feature>
<feature type="sequence conflict" description="In Ref. 1; BAA88554." evidence="5" ref="1">
    <original>GI</original>
    <variation>AL</variation>
    <location>
        <begin position="133"/>
        <end position="134"/>
    </location>
</feature>
<feature type="sequence conflict" description="In Ref. 1; BAA88554." evidence="5" ref="1">
    <original>S</original>
    <variation>A</variation>
    <location>
        <position position="206"/>
    </location>
</feature>
<feature type="sequence conflict" description="In Ref. 1; BAA88554." evidence="5" ref="1">
    <original>VEDTI</original>
    <variation>CGRH</variation>
    <location>
        <begin position="259"/>
        <end position="263"/>
    </location>
</feature>
<feature type="sequence conflict" description="In Ref. 1; BAA88554." evidence="5" ref="1">
    <original>R</original>
    <variation>G</variation>
    <location>
        <position position="269"/>
    </location>
</feature>
<feature type="sequence conflict" description="In Ref. 1; BAA88554." evidence="5" ref="1">
    <original>H</original>
    <variation>N</variation>
    <location>
        <position position="275"/>
    </location>
</feature>
<feature type="sequence conflict" description="In Ref. 1; BAA88554." evidence="5" ref="1">
    <original>D</original>
    <variation>E</variation>
    <location>
        <position position="286"/>
    </location>
</feature>
<feature type="sequence conflict" description="In Ref. 1; BAA88554." evidence="5" ref="1">
    <original>R</original>
    <variation>G</variation>
    <location>
        <position position="289"/>
    </location>
</feature>
<feature type="sequence conflict" description="In Ref. 1; BAA88554." evidence="5" ref="1">
    <original>A</original>
    <variation>G</variation>
    <location>
        <position position="292"/>
    </location>
</feature>
<feature type="sequence conflict" description="In Ref. 1; BAA88554." evidence="5" ref="1">
    <original>PTLPY</original>
    <variation>QRFRN</variation>
    <location>
        <begin position="303"/>
        <end position="307"/>
    </location>
</feature>
<feature type="sequence conflict" description="In Ref. 1; BAA88554." evidence="5" ref="1">
    <original>V</original>
    <variation>L</variation>
    <location>
        <position position="436"/>
    </location>
</feature>
<feature type="sequence conflict" description="In Ref. 1; BAA88554." evidence="5" ref="1">
    <original>G</original>
    <variation>D</variation>
    <location>
        <position position="516"/>
    </location>
</feature>
<dbReference type="EC" id="3.5.1.5" evidence="1"/>
<dbReference type="EMBL" id="AB029154">
    <property type="protein sequence ID" value="BAA88554.1"/>
    <property type="molecule type" value="Genomic_DNA"/>
</dbReference>
<dbReference type="EMBL" id="AJ251883">
    <property type="protein sequence ID" value="CAB81937.1"/>
    <property type="molecule type" value="Genomic_DNA"/>
</dbReference>
<dbReference type="EMBL" id="BA000036">
    <property type="protein sequence ID" value="BAB97479.1"/>
    <property type="molecule type" value="Genomic_DNA"/>
</dbReference>
<dbReference type="EMBL" id="BX927148">
    <property type="protein sequence ID" value="CAF18654.1"/>
    <property type="molecule type" value="Genomic_DNA"/>
</dbReference>
<dbReference type="RefSeq" id="NP_599338.1">
    <property type="nucleotide sequence ID" value="NC_003450.3"/>
</dbReference>
<dbReference type="RefSeq" id="WP_011013378.1">
    <property type="nucleotide sequence ID" value="NC_006958.1"/>
</dbReference>
<dbReference type="SMR" id="Q79VJ3"/>
<dbReference type="STRING" id="196627.cg0115"/>
<dbReference type="MEROPS" id="M38.982"/>
<dbReference type="GeneID" id="1021080"/>
<dbReference type="KEGG" id="cgb:cg0115"/>
<dbReference type="KEGG" id="cgl:Cgl0086"/>
<dbReference type="PATRIC" id="fig|196627.13.peg.87"/>
<dbReference type="eggNOG" id="COG0804">
    <property type="taxonomic scope" value="Bacteria"/>
</dbReference>
<dbReference type="HOGENOM" id="CLU_000980_0_0_11"/>
<dbReference type="OrthoDB" id="9802793at2"/>
<dbReference type="BioCyc" id="CORYNE:G18NG-9635-MONOMER"/>
<dbReference type="UniPathway" id="UPA00258">
    <property type="reaction ID" value="UER00370"/>
</dbReference>
<dbReference type="Proteomes" id="UP000000582">
    <property type="component" value="Chromosome"/>
</dbReference>
<dbReference type="Proteomes" id="UP000001009">
    <property type="component" value="Chromosome"/>
</dbReference>
<dbReference type="GO" id="GO:0005737">
    <property type="term" value="C:cytoplasm"/>
    <property type="evidence" value="ECO:0007669"/>
    <property type="project" value="UniProtKB-SubCell"/>
</dbReference>
<dbReference type="GO" id="GO:0016151">
    <property type="term" value="F:nickel cation binding"/>
    <property type="evidence" value="ECO:0007669"/>
    <property type="project" value="UniProtKB-UniRule"/>
</dbReference>
<dbReference type="GO" id="GO:0009039">
    <property type="term" value="F:urease activity"/>
    <property type="evidence" value="ECO:0007669"/>
    <property type="project" value="UniProtKB-UniRule"/>
</dbReference>
<dbReference type="GO" id="GO:0043419">
    <property type="term" value="P:urea catabolic process"/>
    <property type="evidence" value="ECO:0007669"/>
    <property type="project" value="UniProtKB-UniRule"/>
</dbReference>
<dbReference type="CDD" id="cd00375">
    <property type="entry name" value="Urease_alpha"/>
    <property type="match status" value="1"/>
</dbReference>
<dbReference type="Gene3D" id="3.20.20.140">
    <property type="entry name" value="Metal-dependent hydrolases"/>
    <property type="match status" value="1"/>
</dbReference>
<dbReference type="Gene3D" id="2.30.40.10">
    <property type="entry name" value="Urease, subunit C, domain 1"/>
    <property type="match status" value="1"/>
</dbReference>
<dbReference type="HAMAP" id="MF_01953">
    <property type="entry name" value="Urease_alpha"/>
    <property type="match status" value="1"/>
</dbReference>
<dbReference type="InterPro" id="IPR006680">
    <property type="entry name" value="Amidohydro-rel"/>
</dbReference>
<dbReference type="InterPro" id="IPR011059">
    <property type="entry name" value="Metal-dep_hydrolase_composite"/>
</dbReference>
<dbReference type="InterPro" id="IPR032466">
    <property type="entry name" value="Metal_Hydrolase"/>
</dbReference>
<dbReference type="InterPro" id="IPR011612">
    <property type="entry name" value="Urease_alpha_N_dom"/>
</dbReference>
<dbReference type="InterPro" id="IPR050112">
    <property type="entry name" value="Urease_alpha_subunit"/>
</dbReference>
<dbReference type="InterPro" id="IPR005848">
    <property type="entry name" value="Urease_asu"/>
</dbReference>
<dbReference type="InterPro" id="IPR017951">
    <property type="entry name" value="Urease_asu_c"/>
</dbReference>
<dbReference type="NCBIfam" id="NF009686">
    <property type="entry name" value="PRK13207.1"/>
    <property type="match status" value="1"/>
</dbReference>
<dbReference type="NCBIfam" id="TIGR01792">
    <property type="entry name" value="urease_alph"/>
    <property type="match status" value="1"/>
</dbReference>
<dbReference type="PANTHER" id="PTHR43440">
    <property type="entry name" value="UREASE"/>
    <property type="match status" value="1"/>
</dbReference>
<dbReference type="PANTHER" id="PTHR43440:SF1">
    <property type="entry name" value="UREASE"/>
    <property type="match status" value="1"/>
</dbReference>
<dbReference type="Pfam" id="PF01979">
    <property type="entry name" value="Amidohydro_1"/>
    <property type="match status" value="1"/>
</dbReference>
<dbReference type="Pfam" id="PF00449">
    <property type="entry name" value="Urease_alpha"/>
    <property type="match status" value="1"/>
</dbReference>
<dbReference type="PRINTS" id="PR01752">
    <property type="entry name" value="UREASE"/>
</dbReference>
<dbReference type="SUPFAM" id="SSF51338">
    <property type="entry name" value="Composite domain of metallo-dependent hydrolases"/>
    <property type="match status" value="1"/>
</dbReference>
<dbReference type="SUPFAM" id="SSF51556">
    <property type="entry name" value="Metallo-dependent hydrolases"/>
    <property type="match status" value="1"/>
</dbReference>
<dbReference type="PROSITE" id="PS51368">
    <property type="entry name" value="UREASE_3"/>
    <property type="match status" value="1"/>
</dbReference>
<proteinExistence type="evidence at protein level"/>
<organism>
    <name type="scientific">Corynebacterium glutamicum (strain ATCC 13032 / DSM 20300 / JCM 1318 / BCRC 11384 / CCUG 27702 / LMG 3730 / NBRC 12168 / NCIMB 10025 / NRRL B-2784 / 534)</name>
    <dbReference type="NCBI Taxonomy" id="196627"/>
    <lineage>
        <taxon>Bacteria</taxon>
        <taxon>Bacillati</taxon>
        <taxon>Actinomycetota</taxon>
        <taxon>Actinomycetes</taxon>
        <taxon>Mycobacteriales</taxon>
        <taxon>Corynebacteriaceae</taxon>
        <taxon>Corynebacterium</taxon>
    </lineage>
</organism>
<accession>Q79VJ3</accession>
<accession>Q9L420</accession>
<accession>Q9RHM4</accession>
<name>URE1_CORGL</name>
<keyword id="KW-0963">Cytoplasm</keyword>
<keyword id="KW-0378">Hydrolase</keyword>
<keyword id="KW-0479">Metal-binding</keyword>
<keyword id="KW-0533">Nickel</keyword>
<keyword id="KW-1185">Reference proteome</keyword>
<sequence length="570" mass="61452">MSFEISRKQYTDLYGPTVGDSVRLADTELFLCVEKDYAAIGEEVAFGGGKVIRDGMGQNGTLVRDVDIPDTVITNVIVLDYTGVYKADVALRDGKIFRIGKAGNPNVMENVDIVIGVATDIIAGEGKILTAGGIDTHVHFLGTDQVNTALASGITTMIGGGTGPSQASMATTVTPGQWNTYNMLSAFEGMPMNFGILGKGHGSSKSPLAEQVRAGAIGLKIHEDWGATPSSINTALEVADDMDIQVALHSDTLNEAGFVEDTIEAIAGRVIHTFHTEGAGGGHAPDLIRVAALPNVLPASTNPTLPYTRNTVEEHLDMVMVAHHLNPDIPEDVAFADSRIRAETIAAEDVLHDMGIFSITSSDSQAMGRVGETITRTWQVADHMKRTRGSLTGDAPYNDNNRLRRFIAKYTINPAIAHGVDYVVGSVEEGKFADLVLWDPKFFGVKPDLVIKGGLMVNSLMGDSNGSIPTPQPRTLRNTWGAFGQAVSRSSITFLSQDAIDANVPDLLNLRKQIRGVRGVRNLTKRDMKLNAEMPDIRVDPETYQVFVNGELITSKPAETVPMARRYFLF</sequence>
<reference key="1">
    <citation type="journal article" date="2000" name="DNA Seq.">
        <title>Structure of the urease operon of Corynebacterium glutamicum.</title>
        <authorList>
            <person name="Puskas L.G."/>
            <person name="Inui M."/>
            <person name="Yukawa H."/>
        </authorList>
    </citation>
    <scope>NUCLEOTIDE SEQUENCE [GENOMIC DNA]</scope>
    <scope>DISRUPTION PHENOTYPE</scope>
    <scope>INDUCTION</scope>
    <source>
        <strain>ATCC 13869 / DSMZ 1412 / NCIMB 9567</strain>
    </source>
</reference>
<reference key="2">
    <citation type="journal article" date="2000" name="FEMS Microbiol. Lett.">
        <title>Urease of Corynebacterium glutamicum: organization of corresponding genes and investigation of activity.</title>
        <authorList>
            <person name="Nolden L."/>
            <person name="Beckers G."/>
            <person name="Moeckel B."/>
            <person name="Pfefferle W."/>
            <person name="Nampoothiri K.M."/>
            <person name="Kraemer R."/>
            <person name="Burkovski A."/>
        </authorList>
    </citation>
    <scope>NUCLEOTIDE SEQUENCE [GENOMIC DNA]</scope>
    <scope>OPERON STRUCTURE</scope>
    <scope>DISRUPTION PHENOTYPE</scope>
    <source>
        <strain>ATCC 13032 / DSM 20300 / JCM 1318 / BCRC 11384 / CCUG 27702 / LMG 3730 / NBRC 12168 / NCIMB 10025 / NRRL B-2784 / 534</strain>
    </source>
</reference>
<reference key="3">
    <citation type="journal article" date="2003" name="Appl. Microbiol. Biotechnol.">
        <title>The Corynebacterium glutamicum genome: features and impacts on biotechnological processes.</title>
        <authorList>
            <person name="Ikeda M."/>
            <person name="Nakagawa S."/>
        </authorList>
    </citation>
    <scope>NUCLEOTIDE SEQUENCE [LARGE SCALE GENOMIC DNA]</scope>
    <source>
        <strain>ATCC 13032 / DSM 20300 / JCM 1318 / BCRC 11384 / CCUG 27702 / LMG 3730 / NBRC 12168 / NCIMB 10025 / NRRL B-2784 / 534</strain>
    </source>
</reference>
<reference key="4">
    <citation type="journal article" date="2003" name="J. Biotechnol.">
        <title>The complete Corynebacterium glutamicum ATCC 13032 genome sequence and its impact on the production of L-aspartate-derived amino acids and vitamins.</title>
        <authorList>
            <person name="Kalinowski J."/>
            <person name="Bathe B."/>
            <person name="Bartels D."/>
            <person name="Bischoff N."/>
            <person name="Bott M."/>
            <person name="Burkovski A."/>
            <person name="Dusch N."/>
            <person name="Eggeling L."/>
            <person name="Eikmanns B.J."/>
            <person name="Gaigalat L."/>
            <person name="Goesmann A."/>
            <person name="Hartmann M."/>
            <person name="Huthmacher K."/>
            <person name="Kraemer R."/>
            <person name="Linke B."/>
            <person name="McHardy A.C."/>
            <person name="Meyer F."/>
            <person name="Moeckel B."/>
            <person name="Pfefferle W."/>
            <person name="Puehler A."/>
            <person name="Rey D.A."/>
            <person name="Rueckert C."/>
            <person name="Rupp O."/>
            <person name="Sahm H."/>
            <person name="Wendisch V.F."/>
            <person name="Wiegraebe I."/>
            <person name="Tauch A."/>
        </authorList>
    </citation>
    <scope>NUCLEOTIDE SEQUENCE [LARGE SCALE GENOMIC DNA]</scope>
    <source>
        <strain>ATCC 13032 / DSM 20300 / JCM 1318 / BCRC 11384 / CCUG 27702 / LMG 3730 / NBRC 12168 / NCIMB 10025 / NRRL B-2784 / 534</strain>
    </source>
</reference>
<reference key="5">
    <citation type="journal article" date="2004" name="J. Bacteriol.">
        <title>Molecular identification of the urea uptake system and transcriptional analysis of urea transporter- and urease-encoding genes in Corynebacterium glutamicum.</title>
        <authorList>
            <person name="Beckers G."/>
            <person name="Bendt A.K."/>
            <person name="Kraemer R."/>
            <person name="Burkovski A."/>
        </authorList>
    </citation>
    <scope>INDUCTION</scope>
    <scope>IDENTIFICATION BY MASS SPECTROMETRY</scope>
</reference>
<protein>
    <recommendedName>
        <fullName evidence="1">Urease subunit alpha</fullName>
        <ecNumber evidence="1">3.5.1.5</ecNumber>
    </recommendedName>
    <alternativeName>
        <fullName evidence="1">Urea amidohydrolase subunit alpha</fullName>
    </alternativeName>
</protein>
<comment type="catalytic activity">
    <reaction evidence="1">
        <text>urea + 2 H2O + H(+) = hydrogencarbonate + 2 NH4(+)</text>
        <dbReference type="Rhea" id="RHEA:20557"/>
        <dbReference type="ChEBI" id="CHEBI:15377"/>
        <dbReference type="ChEBI" id="CHEBI:15378"/>
        <dbReference type="ChEBI" id="CHEBI:16199"/>
        <dbReference type="ChEBI" id="CHEBI:17544"/>
        <dbReference type="ChEBI" id="CHEBI:28938"/>
        <dbReference type="EC" id="3.5.1.5"/>
    </reaction>
</comment>
<comment type="cofactor">
    <cofactor evidence="1">
        <name>Ni cation</name>
        <dbReference type="ChEBI" id="CHEBI:25516"/>
    </cofactor>
    <text evidence="1">Binds 2 nickel ions per subunit.</text>
</comment>
<comment type="pathway">
    <text evidence="1">Nitrogen metabolism; urea degradation; CO(2) and NH(3) from urea (urease route): step 1/1.</text>
</comment>
<comment type="subunit">
    <text evidence="1">Heterotrimer of UreA (gamma), UreB (beta) and UreC (alpha) subunits. Three heterotrimers associate to form the active enzyme.</text>
</comment>
<comment type="subcellular location">
    <subcellularLocation>
        <location evidence="1">Cytoplasm</location>
    </subcellularLocation>
</comment>
<comment type="induction">
    <text evidence="3 4">By urea and nitrogen starvation.</text>
</comment>
<comment type="PTM">
    <text evidence="1">Carboxylation allows a single lysine to coordinate two nickel ions.</text>
</comment>
<comment type="disruption phenotype">
    <text evidence="2 3">Cells are urease negative and are no longer able to transport urea.</text>
</comment>
<comment type="similarity">
    <text evidence="1">Belongs to the metallo-dependent hydrolases superfamily. Urease alpha subunit family.</text>
</comment>